<proteinExistence type="inferred from homology"/>
<comment type="catalytic activity">
    <reaction evidence="1">
        <text>D-erythro-1-(imidazol-4-yl)glycerol 3-phosphate = 3-(imidazol-4-yl)-2-oxopropyl phosphate + H2O</text>
        <dbReference type="Rhea" id="RHEA:11040"/>
        <dbReference type="ChEBI" id="CHEBI:15377"/>
        <dbReference type="ChEBI" id="CHEBI:57766"/>
        <dbReference type="ChEBI" id="CHEBI:58278"/>
        <dbReference type="EC" id="4.2.1.19"/>
    </reaction>
</comment>
<comment type="catalytic activity">
    <reaction evidence="1">
        <text>L-histidinol phosphate + H2O = L-histidinol + phosphate</text>
        <dbReference type="Rhea" id="RHEA:14465"/>
        <dbReference type="ChEBI" id="CHEBI:15377"/>
        <dbReference type="ChEBI" id="CHEBI:43474"/>
        <dbReference type="ChEBI" id="CHEBI:57699"/>
        <dbReference type="ChEBI" id="CHEBI:57980"/>
        <dbReference type="EC" id="3.1.3.15"/>
    </reaction>
</comment>
<comment type="cofactor">
    <cofactor evidence="1">
        <name>Mg(2+)</name>
        <dbReference type="ChEBI" id="CHEBI:18420"/>
    </cofactor>
</comment>
<comment type="cofactor">
    <cofactor evidence="1">
        <name>Zn(2+)</name>
        <dbReference type="ChEBI" id="CHEBI:29105"/>
    </cofactor>
</comment>
<comment type="pathway">
    <text evidence="1">Amino-acid biosynthesis; L-histidine biosynthesis; L-histidine from 5-phospho-alpha-D-ribose 1-diphosphate: step 6/9.</text>
</comment>
<comment type="pathway">
    <text evidence="1">Amino-acid biosynthesis; L-histidine biosynthesis; L-histidine from 5-phospho-alpha-D-ribose 1-diphosphate: step 8/9.</text>
</comment>
<comment type="subcellular location">
    <subcellularLocation>
        <location evidence="1">Cytoplasm</location>
    </subcellularLocation>
</comment>
<comment type="similarity">
    <text evidence="1">In the N-terminal section; belongs to the histidinol-phosphatase family.</text>
</comment>
<comment type="similarity">
    <text evidence="1">In the C-terminal section; belongs to the imidazoleglycerol-phosphate dehydratase family.</text>
</comment>
<evidence type="ECO:0000255" key="1">
    <source>
        <dbReference type="HAMAP-Rule" id="MF_01022"/>
    </source>
</evidence>
<organism>
    <name type="scientific">Buchnera aphidicola subsp. Acyrthosiphon pisum (strain APS)</name>
    <name type="common">Acyrthosiphon pisum symbiotic bacterium</name>
    <dbReference type="NCBI Taxonomy" id="107806"/>
    <lineage>
        <taxon>Bacteria</taxon>
        <taxon>Pseudomonadati</taxon>
        <taxon>Pseudomonadota</taxon>
        <taxon>Gammaproteobacteria</taxon>
        <taxon>Enterobacterales</taxon>
        <taxon>Erwiniaceae</taxon>
        <taxon>Buchnera</taxon>
    </lineage>
</organism>
<keyword id="KW-0028">Amino-acid biosynthesis</keyword>
<keyword id="KW-0963">Cytoplasm</keyword>
<keyword id="KW-0368">Histidine biosynthesis</keyword>
<keyword id="KW-0378">Hydrolase</keyword>
<keyword id="KW-0456">Lyase</keyword>
<keyword id="KW-0460">Magnesium</keyword>
<keyword id="KW-0479">Metal-binding</keyword>
<keyword id="KW-0511">Multifunctional enzyme</keyword>
<keyword id="KW-1185">Reference proteome</keyword>
<keyword id="KW-0862">Zinc</keyword>
<sequence length="353" mass="40836">MKNKILFIDRDGTLIDEPINTFQVDSINKLVFKKYVISSLRKLVELDYKLIMITNQDGLGTESFPLQDFSTAHLFMLSVFRSEGVIFDDILICPHFLDDDCVCRKPKIKMIEPWLDKIDLKKSYVIGDRDTDMQLSNNLKIKGIKYKEDICNWLHITKYIIKHNRYAEIIRRTKETKVSIKVWLDLEETSKIDTGVKFFDHMLEQLSVHSGICMNISVQGDLDIDDHHTIEDTGIVLGEALLQALGKKNGLSRFGFYLPMDESRSNCIMDISNRPYLNFKAKFNHKMAGDLSTNMVEHFFYSLCYSMKITLHLYAEGKNDHHCIESLFKVFGRTLRQAIKIEGNMLPTSKGIL</sequence>
<name>HIS7_BUCAI</name>
<feature type="chain" id="PRO_0000158201" description="Histidine biosynthesis bifunctional protein HisB">
    <location>
        <begin position="1"/>
        <end position="353"/>
    </location>
</feature>
<feature type="region of interest" description="Histidinol-phosphatase" evidence="1">
    <location>
        <begin position="1"/>
        <end position="164"/>
    </location>
</feature>
<feature type="region of interest" description="Imidazoleglycerol-phosphate dehydratase" evidence="1">
    <location>
        <begin position="165"/>
        <end position="353"/>
    </location>
</feature>
<feature type="active site" description="Nucleophile" evidence="1">
    <location>
        <position position="9"/>
    </location>
</feature>
<feature type="active site" description="Proton donor" evidence="1">
    <location>
        <position position="11"/>
    </location>
</feature>
<feature type="binding site" evidence="1">
    <location>
        <position position="9"/>
    </location>
    <ligand>
        <name>Mg(2+)</name>
        <dbReference type="ChEBI" id="CHEBI:18420"/>
    </ligand>
</feature>
<feature type="binding site" evidence="1">
    <location>
        <position position="11"/>
    </location>
    <ligand>
        <name>Mg(2+)</name>
        <dbReference type="ChEBI" id="CHEBI:18420"/>
    </ligand>
</feature>
<feature type="binding site" evidence="1">
    <location>
        <position position="93"/>
    </location>
    <ligand>
        <name>Zn(2+)</name>
        <dbReference type="ChEBI" id="CHEBI:29105"/>
    </ligand>
</feature>
<feature type="binding site" evidence="1">
    <location>
        <position position="95"/>
    </location>
    <ligand>
        <name>Zn(2+)</name>
        <dbReference type="ChEBI" id="CHEBI:29105"/>
    </ligand>
</feature>
<feature type="binding site" evidence="1">
    <location>
        <position position="101"/>
    </location>
    <ligand>
        <name>Zn(2+)</name>
        <dbReference type="ChEBI" id="CHEBI:29105"/>
    </ligand>
</feature>
<feature type="binding site" evidence="1">
    <location>
        <position position="103"/>
    </location>
    <ligand>
        <name>Zn(2+)</name>
        <dbReference type="ChEBI" id="CHEBI:29105"/>
    </ligand>
</feature>
<feature type="binding site" evidence="1">
    <location>
        <position position="128"/>
    </location>
    <ligand>
        <name>Mg(2+)</name>
        <dbReference type="ChEBI" id="CHEBI:18420"/>
    </ligand>
</feature>
<accession>P57203</accession>
<dbReference type="EC" id="3.1.3.15" evidence="1"/>
<dbReference type="EC" id="4.2.1.19" evidence="1"/>
<dbReference type="EMBL" id="BA000003">
    <property type="protein sequence ID" value="BAB12821.1"/>
    <property type="molecule type" value="Genomic_DNA"/>
</dbReference>
<dbReference type="RefSeq" id="NP_239935.1">
    <property type="nucleotide sequence ID" value="NC_002528.1"/>
</dbReference>
<dbReference type="RefSeq" id="WP_009874057.1">
    <property type="nucleotide sequence ID" value="NZ_AP036055.1"/>
</dbReference>
<dbReference type="SMR" id="P57203"/>
<dbReference type="STRING" id="563178.BUAP5A_100"/>
<dbReference type="EnsemblBacteria" id="BAB12821">
    <property type="protein sequence ID" value="BAB12821"/>
    <property type="gene ID" value="BAB12821"/>
</dbReference>
<dbReference type="KEGG" id="buc:BU102"/>
<dbReference type="PATRIC" id="fig|107806.10.peg.110"/>
<dbReference type="eggNOG" id="COG0131">
    <property type="taxonomic scope" value="Bacteria"/>
</dbReference>
<dbReference type="eggNOG" id="COG0241">
    <property type="taxonomic scope" value="Bacteria"/>
</dbReference>
<dbReference type="HOGENOM" id="CLU_044308_0_0_6"/>
<dbReference type="UniPathway" id="UPA00031">
    <property type="reaction ID" value="UER00011"/>
</dbReference>
<dbReference type="UniPathway" id="UPA00031">
    <property type="reaction ID" value="UER00013"/>
</dbReference>
<dbReference type="Proteomes" id="UP000001806">
    <property type="component" value="Chromosome"/>
</dbReference>
<dbReference type="GO" id="GO:0005737">
    <property type="term" value="C:cytoplasm"/>
    <property type="evidence" value="ECO:0007669"/>
    <property type="project" value="UniProtKB-SubCell"/>
</dbReference>
<dbReference type="GO" id="GO:0004401">
    <property type="term" value="F:histidinol-phosphatase activity"/>
    <property type="evidence" value="ECO:0007669"/>
    <property type="project" value="UniProtKB-UniRule"/>
</dbReference>
<dbReference type="GO" id="GO:0004424">
    <property type="term" value="F:imidazoleglycerol-phosphate dehydratase activity"/>
    <property type="evidence" value="ECO:0007669"/>
    <property type="project" value="UniProtKB-UniRule"/>
</dbReference>
<dbReference type="GO" id="GO:0046872">
    <property type="term" value="F:metal ion binding"/>
    <property type="evidence" value="ECO:0007669"/>
    <property type="project" value="UniProtKB-KW"/>
</dbReference>
<dbReference type="GO" id="GO:0000105">
    <property type="term" value="P:L-histidine biosynthetic process"/>
    <property type="evidence" value="ECO:0007669"/>
    <property type="project" value="UniProtKB-UniRule"/>
</dbReference>
<dbReference type="CDD" id="cd07914">
    <property type="entry name" value="IGPD"/>
    <property type="match status" value="1"/>
</dbReference>
<dbReference type="FunFam" id="3.30.230.40:FF:000001">
    <property type="entry name" value="Imidazoleglycerol-phosphate dehydratase HisB"/>
    <property type="match status" value="1"/>
</dbReference>
<dbReference type="FunFam" id="3.30.230.40:FF:000003">
    <property type="entry name" value="Imidazoleglycerol-phosphate dehydratase HisB"/>
    <property type="match status" value="1"/>
</dbReference>
<dbReference type="Gene3D" id="3.40.50.1000">
    <property type="entry name" value="HAD superfamily/HAD-like"/>
    <property type="match status" value="1"/>
</dbReference>
<dbReference type="Gene3D" id="3.30.230.40">
    <property type="entry name" value="Imidazole glycerol phosphate dehydratase, domain 1"/>
    <property type="match status" value="2"/>
</dbReference>
<dbReference type="HAMAP" id="MF_01022">
    <property type="entry name" value="Bifunc_HisB"/>
    <property type="match status" value="1"/>
</dbReference>
<dbReference type="HAMAP" id="MF_00076">
    <property type="entry name" value="HisB"/>
    <property type="match status" value="1"/>
</dbReference>
<dbReference type="InterPro" id="IPR036412">
    <property type="entry name" value="HAD-like_sf"/>
</dbReference>
<dbReference type="InterPro" id="IPR006549">
    <property type="entry name" value="HAD-SF_hydro_IIIA"/>
</dbReference>
<dbReference type="InterPro" id="IPR023214">
    <property type="entry name" value="HAD_sf"/>
</dbReference>
<dbReference type="InterPro" id="IPR020566">
    <property type="entry name" value="His_synth_bifunc_HisB"/>
</dbReference>
<dbReference type="InterPro" id="IPR005954">
    <property type="entry name" value="HisB_N"/>
</dbReference>
<dbReference type="InterPro" id="IPR006543">
    <property type="entry name" value="Histidinol-phos"/>
</dbReference>
<dbReference type="InterPro" id="IPR038494">
    <property type="entry name" value="IGPD_sf"/>
</dbReference>
<dbReference type="InterPro" id="IPR000807">
    <property type="entry name" value="ImidazoleglycerolP_deHydtase"/>
</dbReference>
<dbReference type="InterPro" id="IPR020565">
    <property type="entry name" value="ImidazoleglycerP_deHydtase_CS"/>
</dbReference>
<dbReference type="InterPro" id="IPR013954">
    <property type="entry name" value="PNK3P"/>
</dbReference>
<dbReference type="InterPro" id="IPR020568">
    <property type="entry name" value="Ribosomal_Su5_D2-typ_SF"/>
</dbReference>
<dbReference type="NCBIfam" id="TIGR01662">
    <property type="entry name" value="HAD-SF-IIIA"/>
    <property type="match status" value="1"/>
</dbReference>
<dbReference type="NCBIfam" id="TIGR01261">
    <property type="entry name" value="hisB_Nterm"/>
    <property type="match status" value="1"/>
</dbReference>
<dbReference type="NCBIfam" id="TIGR01656">
    <property type="entry name" value="Histidinol-ppas"/>
    <property type="match status" value="1"/>
</dbReference>
<dbReference type="NCBIfam" id="NF002111">
    <property type="entry name" value="PRK00951.2-1"/>
    <property type="match status" value="1"/>
</dbReference>
<dbReference type="NCBIfam" id="NF002114">
    <property type="entry name" value="PRK00951.2-4"/>
    <property type="match status" value="1"/>
</dbReference>
<dbReference type="NCBIfam" id="NF003937">
    <property type="entry name" value="PRK05446.1"/>
    <property type="match status" value="1"/>
</dbReference>
<dbReference type="PANTHER" id="PTHR23133:SF2">
    <property type="entry name" value="IMIDAZOLEGLYCEROL-PHOSPHATE DEHYDRATASE"/>
    <property type="match status" value="1"/>
</dbReference>
<dbReference type="PANTHER" id="PTHR23133">
    <property type="entry name" value="IMIDAZOLEGLYCEROL-PHOSPHATE DEHYDRATASE HIS7"/>
    <property type="match status" value="1"/>
</dbReference>
<dbReference type="Pfam" id="PF00475">
    <property type="entry name" value="IGPD"/>
    <property type="match status" value="1"/>
</dbReference>
<dbReference type="Pfam" id="PF08645">
    <property type="entry name" value="PNK3P"/>
    <property type="match status" value="1"/>
</dbReference>
<dbReference type="SUPFAM" id="SSF56784">
    <property type="entry name" value="HAD-like"/>
    <property type="match status" value="1"/>
</dbReference>
<dbReference type="SUPFAM" id="SSF54211">
    <property type="entry name" value="Ribosomal protein S5 domain 2-like"/>
    <property type="match status" value="2"/>
</dbReference>
<dbReference type="PROSITE" id="PS00954">
    <property type="entry name" value="IGP_DEHYDRATASE_1"/>
    <property type="match status" value="1"/>
</dbReference>
<dbReference type="PROSITE" id="PS00955">
    <property type="entry name" value="IGP_DEHYDRATASE_2"/>
    <property type="match status" value="1"/>
</dbReference>
<protein>
    <recommendedName>
        <fullName evidence="1">Histidine biosynthesis bifunctional protein HisB</fullName>
    </recommendedName>
    <domain>
        <recommendedName>
            <fullName evidence="1">Histidinol-phosphatase</fullName>
            <ecNumber evidence="1">3.1.3.15</ecNumber>
        </recommendedName>
    </domain>
    <domain>
        <recommendedName>
            <fullName evidence="1">Imidazoleglycerol-phosphate dehydratase</fullName>
            <shortName evidence="1">IGPD</shortName>
            <ecNumber evidence="1">4.2.1.19</ecNumber>
        </recommendedName>
    </domain>
</protein>
<reference key="1">
    <citation type="journal article" date="2000" name="Nature">
        <title>Genome sequence of the endocellular bacterial symbiont of aphids Buchnera sp. APS.</title>
        <authorList>
            <person name="Shigenobu S."/>
            <person name="Watanabe H."/>
            <person name="Hattori M."/>
            <person name="Sakaki Y."/>
            <person name="Ishikawa H."/>
        </authorList>
    </citation>
    <scope>NUCLEOTIDE SEQUENCE [LARGE SCALE GENOMIC DNA]</scope>
    <source>
        <strain>APS</strain>
    </source>
</reference>
<gene>
    <name evidence="1" type="primary">hisB</name>
    <name type="ordered locus">BU102</name>
</gene>